<proteinExistence type="inferred from homology"/>
<protein>
    <recommendedName>
        <fullName evidence="1">7-cyano-7-deazaguanine synthase</fullName>
        <ecNumber evidence="1">6.3.4.20</ecNumber>
    </recommendedName>
    <alternativeName>
        <fullName evidence="1">7-cyano-7-carbaguanine synthase</fullName>
    </alternativeName>
    <alternativeName>
        <fullName evidence="1">PreQ(0) synthase</fullName>
    </alternativeName>
    <alternativeName>
        <fullName evidence="1">Queuosine biosynthesis protein QueC</fullName>
    </alternativeName>
</protein>
<gene>
    <name evidence="1" type="primary">queC</name>
    <name type="ordered locus">Rpic_0687</name>
</gene>
<name>QUEC_RALPJ</name>
<comment type="function">
    <text evidence="1">Catalyzes the ATP-dependent conversion of 7-carboxy-7-deazaguanine (CDG) to 7-cyano-7-deazaguanine (preQ(0)).</text>
</comment>
<comment type="catalytic activity">
    <reaction evidence="1">
        <text>7-carboxy-7-deazaguanine + NH4(+) + ATP = 7-cyano-7-deazaguanine + ADP + phosphate + H2O + H(+)</text>
        <dbReference type="Rhea" id="RHEA:27982"/>
        <dbReference type="ChEBI" id="CHEBI:15377"/>
        <dbReference type="ChEBI" id="CHEBI:15378"/>
        <dbReference type="ChEBI" id="CHEBI:28938"/>
        <dbReference type="ChEBI" id="CHEBI:30616"/>
        <dbReference type="ChEBI" id="CHEBI:43474"/>
        <dbReference type="ChEBI" id="CHEBI:45075"/>
        <dbReference type="ChEBI" id="CHEBI:61036"/>
        <dbReference type="ChEBI" id="CHEBI:456216"/>
        <dbReference type="EC" id="6.3.4.20"/>
    </reaction>
</comment>
<comment type="cofactor">
    <cofactor evidence="1">
        <name>Zn(2+)</name>
        <dbReference type="ChEBI" id="CHEBI:29105"/>
    </cofactor>
    <text evidence="1">Binds 1 zinc ion per subunit.</text>
</comment>
<comment type="pathway">
    <text evidence="1">Purine metabolism; 7-cyano-7-deazaguanine biosynthesis.</text>
</comment>
<comment type="similarity">
    <text evidence="1">Belongs to the QueC family.</text>
</comment>
<feature type="chain" id="PRO_1000186623" description="7-cyano-7-deazaguanine synthase">
    <location>
        <begin position="1"/>
        <end position="224"/>
    </location>
</feature>
<feature type="binding site" evidence="1">
    <location>
        <begin position="9"/>
        <end position="19"/>
    </location>
    <ligand>
        <name>ATP</name>
        <dbReference type="ChEBI" id="CHEBI:30616"/>
    </ligand>
</feature>
<feature type="binding site" evidence="1">
    <location>
        <position position="189"/>
    </location>
    <ligand>
        <name>Zn(2+)</name>
        <dbReference type="ChEBI" id="CHEBI:29105"/>
    </ligand>
</feature>
<feature type="binding site" evidence="1">
    <location>
        <position position="199"/>
    </location>
    <ligand>
        <name>Zn(2+)</name>
        <dbReference type="ChEBI" id="CHEBI:29105"/>
    </ligand>
</feature>
<feature type="binding site" evidence="1">
    <location>
        <position position="202"/>
    </location>
    <ligand>
        <name>Zn(2+)</name>
        <dbReference type="ChEBI" id="CHEBI:29105"/>
    </ligand>
</feature>
<feature type="binding site" evidence="1">
    <location>
        <position position="205"/>
    </location>
    <ligand>
        <name>Zn(2+)</name>
        <dbReference type="ChEBI" id="CHEBI:29105"/>
    </ligand>
</feature>
<accession>B2U7H6</accession>
<keyword id="KW-0067">ATP-binding</keyword>
<keyword id="KW-0436">Ligase</keyword>
<keyword id="KW-0479">Metal-binding</keyword>
<keyword id="KW-0547">Nucleotide-binding</keyword>
<keyword id="KW-0671">Queuosine biosynthesis</keyword>
<keyword id="KW-0862">Zinc</keyword>
<organism>
    <name type="scientific">Ralstonia pickettii (strain 12J)</name>
    <dbReference type="NCBI Taxonomy" id="402626"/>
    <lineage>
        <taxon>Bacteria</taxon>
        <taxon>Pseudomonadati</taxon>
        <taxon>Pseudomonadota</taxon>
        <taxon>Betaproteobacteria</taxon>
        <taxon>Burkholderiales</taxon>
        <taxon>Burkholderiaceae</taxon>
        <taxon>Ralstonia</taxon>
    </lineage>
</organism>
<reference key="1">
    <citation type="submission" date="2008-05" db="EMBL/GenBank/DDBJ databases">
        <title>Complete sequence of chromosome 1 of Ralstonia pickettii 12J.</title>
        <authorList>
            <person name="Lucas S."/>
            <person name="Copeland A."/>
            <person name="Lapidus A."/>
            <person name="Glavina del Rio T."/>
            <person name="Dalin E."/>
            <person name="Tice H."/>
            <person name="Bruce D."/>
            <person name="Goodwin L."/>
            <person name="Pitluck S."/>
            <person name="Meincke L."/>
            <person name="Brettin T."/>
            <person name="Detter J.C."/>
            <person name="Han C."/>
            <person name="Kuske C.R."/>
            <person name="Schmutz J."/>
            <person name="Larimer F."/>
            <person name="Land M."/>
            <person name="Hauser L."/>
            <person name="Kyrpides N."/>
            <person name="Mikhailova N."/>
            <person name="Marsh T."/>
            <person name="Richardson P."/>
        </authorList>
    </citation>
    <scope>NUCLEOTIDE SEQUENCE [LARGE SCALE GENOMIC DNA]</scope>
    <source>
        <strain>12J</strain>
    </source>
</reference>
<dbReference type="EC" id="6.3.4.20" evidence="1"/>
<dbReference type="EMBL" id="CP001068">
    <property type="protein sequence ID" value="ACD25838.1"/>
    <property type="molecule type" value="Genomic_DNA"/>
</dbReference>
<dbReference type="SMR" id="B2U7H6"/>
<dbReference type="STRING" id="402626.Rpic_0687"/>
<dbReference type="KEGG" id="rpi:Rpic_0687"/>
<dbReference type="PATRIC" id="fig|402626.5.peg.1884"/>
<dbReference type="eggNOG" id="COG0603">
    <property type="taxonomic scope" value="Bacteria"/>
</dbReference>
<dbReference type="HOGENOM" id="CLU_081854_1_1_4"/>
<dbReference type="UniPathway" id="UPA00391"/>
<dbReference type="GO" id="GO:0005524">
    <property type="term" value="F:ATP binding"/>
    <property type="evidence" value="ECO:0007669"/>
    <property type="project" value="UniProtKB-UniRule"/>
</dbReference>
<dbReference type="GO" id="GO:0016879">
    <property type="term" value="F:ligase activity, forming carbon-nitrogen bonds"/>
    <property type="evidence" value="ECO:0007669"/>
    <property type="project" value="UniProtKB-UniRule"/>
</dbReference>
<dbReference type="GO" id="GO:0008270">
    <property type="term" value="F:zinc ion binding"/>
    <property type="evidence" value="ECO:0007669"/>
    <property type="project" value="UniProtKB-UniRule"/>
</dbReference>
<dbReference type="GO" id="GO:0008616">
    <property type="term" value="P:queuosine biosynthetic process"/>
    <property type="evidence" value="ECO:0007669"/>
    <property type="project" value="UniProtKB-UniRule"/>
</dbReference>
<dbReference type="CDD" id="cd01995">
    <property type="entry name" value="QueC-like"/>
    <property type="match status" value="1"/>
</dbReference>
<dbReference type="FunFam" id="3.40.50.620:FF:000131">
    <property type="entry name" value="7-cyano-7-deazaguanine synthase"/>
    <property type="match status" value="1"/>
</dbReference>
<dbReference type="Gene3D" id="3.40.50.620">
    <property type="entry name" value="HUPs"/>
    <property type="match status" value="1"/>
</dbReference>
<dbReference type="HAMAP" id="MF_01633">
    <property type="entry name" value="QueC"/>
    <property type="match status" value="1"/>
</dbReference>
<dbReference type="InterPro" id="IPR018317">
    <property type="entry name" value="QueC"/>
</dbReference>
<dbReference type="InterPro" id="IPR014729">
    <property type="entry name" value="Rossmann-like_a/b/a_fold"/>
</dbReference>
<dbReference type="NCBIfam" id="TIGR00364">
    <property type="entry name" value="7-cyano-7-deazaguanine synthase QueC"/>
    <property type="match status" value="1"/>
</dbReference>
<dbReference type="PANTHER" id="PTHR42914">
    <property type="entry name" value="7-CYANO-7-DEAZAGUANINE SYNTHASE"/>
    <property type="match status" value="1"/>
</dbReference>
<dbReference type="PANTHER" id="PTHR42914:SF1">
    <property type="entry name" value="7-CYANO-7-DEAZAGUANINE SYNTHASE"/>
    <property type="match status" value="1"/>
</dbReference>
<dbReference type="Pfam" id="PF06508">
    <property type="entry name" value="QueC"/>
    <property type="match status" value="1"/>
</dbReference>
<dbReference type="PIRSF" id="PIRSF006293">
    <property type="entry name" value="ExsB"/>
    <property type="match status" value="1"/>
</dbReference>
<dbReference type="SUPFAM" id="SSF52402">
    <property type="entry name" value="Adenine nucleotide alpha hydrolases-like"/>
    <property type="match status" value="1"/>
</dbReference>
<sequence>MKKRAIVLLSGGLDSATVLAMANADGFETYALSMRYGQRHSSELEAAKKVAAALGAVRHEIVDLDLRKFGGSALTDDALDVPTDGVQSGIPITYVPARNTIMLSLALGWAEAVGARDLFFGANAVDYSGYPDCRPEYVAAYETLANLATKAGVEGERIRVNAPIINMTKAEIIQAGVRLGVDYGLTVSCYKADDAGRACGVCDSCRIRKAGFEAAGVPDPTRYV</sequence>
<evidence type="ECO:0000255" key="1">
    <source>
        <dbReference type="HAMAP-Rule" id="MF_01633"/>
    </source>
</evidence>